<proteinExistence type="inferred from homology"/>
<sequence>MSFTVAIVGRPNVGKSTLFNRLVGKKLALVDDTPGVTRDRRPGDAKLIDLRFTIIDTAGLEQSGPETLQGRMWAQTEAAIDEADVTLFVIDAKAGLTPADETLGEMLRRRGKPVVLVANKSEARGSDAGFYDAFTLGLGEPCPVSAEHGQGMIDLRDAIVEAIGEDMAFPPDVDEAETDIVLPRTEPGSEEEEDEEPVYDETKPLRVAIIGRPNAGKSTLINRFLGEDRLLTGPEAGITRDSISVEWDWRGRTIKMFDTAGMRRKAKVTEKLEKLSVADSLRSIRFAETVVIVFDSTIPFEKQDLQLVDLVIREGRAAVLAFNKWDLVEDPQAYLADLREKTERLLPQARGIRAVPMSGQTGYGLDRLMQSIIDTDKTWNRRISTAKLNRWLDAQTTQHPPPAVSGRRLKLKYMTQVKARPPAFMISCTRPEAIPESYTRYLVNGLRKDFDMPGVPIRVHYRGSDNPFESKAKKRR</sequence>
<organism>
    <name type="scientific">Agrobacterium fabrum (strain C58 / ATCC 33970)</name>
    <name type="common">Agrobacterium tumefaciens (strain C58)</name>
    <dbReference type="NCBI Taxonomy" id="176299"/>
    <lineage>
        <taxon>Bacteria</taxon>
        <taxon>Pseudomonadati</taxon>
        <taxon>Pseudomonadota</taxon>
        <taxon>Alphaproteobacteria</taxon>
        <taxon>Hyphomicrobiales</taxon>
        <taxon>Rhizobiaceae</taxon>
        <taxon>Rhizobium/Agrobacterium group</taxon>
        <taxon>Agrobacterium</taxon>
        <taxon>Agrobacterium tumefaciens complex</taxon>
    </lineage>
</organism>
<comment type="function">
    <text evidence="1">GTPase that plays an essential role in the late steps of ribosome biogenesis.</text>
</comment>
<comment type="subunit">
    <text evidence="1">Associates with the 50S ribosomal subunit.</text>
</comment>
<comment type="similarity">
    <text evidence="1">Belongs to the TRAFAC class TrmE-Era-EngA-EngB-Septin-like GTPase superfamily. EngA (Der) GTPase family.</text>
</comment>
<name>DER_AGRFC</name>
<accession>Q8UD28</accession>
<protein>
    <recommendedName>
        <fullName evidence="1">GTPase Der</fullName>
    </recommendedName>
    <alternativeName>
        <fullName evidence="1">GTP-binding protein EngA</fullName>
    </alternativeName>
</protein>
<dbReference type="EMBL" id="AE007869">
    <property type="protein sequence ID" value="AAK88042.1"/>
    <property type="molecule type" value="Genomic_DNA"/>
</dbReference>
<dbReference type="PIR" id="A97636">
    <property type="entry name" value="A97636"/>
</dbReference>
<dbReference type="PIR" id="AC2859">
    <property type="entry name" value="AC2859"/>
</dbReference>
<dbReference type="RefSeq" id="NP_355257.1">
    <property type="nucleotide sequence ID" value="NC_003062.2"/>
</dbReference>
<dbReference type="RefSeq" id="WP_010972209.1">
    <property type="nucleotide sequence ID" value="NC_003062.2"/>
</dbReference>
<dbReference type="SMR" id="Q8UD28"/>
<dbReference type="STRING" id="176299.Atu2300"/>
<dbReference type="EnsemblBacteria" id="AAK88042">
    <property type="protein sequence ID" value="AAK88042"/>
    <property type="gene ID" value="Atu2300"/>
</dbReference>
<dbReference type="GeneID" id="1134338"/>
<dbReference type="KEGG" id="atu:Atu2300"/>
<dbReference type="PATRIC" id="fig|176299.10.peg.2313"/>
<dbReference type="eggNOG" id="COG1160">
    <property type="taxonomic scope" value="Bacteria"/>
</dbReference>
<dbReference type="HOGENOM" id="CLU_016077_5_0_5"/>
<dbReference type="OrthoDB" id="9805918at2"/>
<dbReference type="PhylomeDB" id="Q8UD28"/>
<dbReference type="BioCyc" id="AGRO:ATU2300-MONOMER"/>
<dbReference type="Proteomes" id="UP000000813">
    <property type="component" value="Chromosome circular"/>
</dbReference>
<dbReference type="GO" id="GO:0005525">
    <property type="term" value="F:GTP binding"/>
    <property type="evidence" value="ECO:0007669"/>
    <property type="project" value="UniProtKB-UniRule"/>
</dbReference>
<dbReference type="GO" id="GO:0042254">
    <property type="term" value="P:ribosome biogenesis"/>
    <property type="evidence" value="ECO:0007669"/>
    <property type="project" value="UniProtKB-KW"/>
</dbReference>
<dbReference type="CDD" id="cd01894">
    <property type="entry name" value="EngA1"/>
    <property type="match status" value="1"/>
</dbReference>
<dbReference type="CDD" id="cd01895">
    <property type="entry name" value="EngA2"/>
    <property type="match status" value="1"/>
</dbReference>
<dbReference type="FunFam" id="3.30.300.20:FF:000004">
    <property type="entry name" value="GTPase Der"/>
    <property type="match status" value="1"/>
</dbReference>
<dbReference type="FunFam" id="3.40.50.300:FF:000057">
    <property type="entry name" value="GTPase Der"/>
    <property type="match status" value="1"/>
</dbReference>
<dbReference type="Gene3D" id="3.30.300.20">
    <property type="match status" value="1"/>
</dbReference>
<dbReference type="Gene3D" id="3.40.50.300">
    <property type="entry name" value="P-loop containing nucleotide triphosphate hydrolases"/>
    <property type="match status" value="2"/>
</dbReference>
<dbReference type="HAMAP" id="MF_00195">
    <property type="entry name" value="GTPase_Der"/>
    <property type="match status" value="1"/>
</dbReference>
<dbReference type="InterPro" id="IPR031166">
    <property type="entry name" value="G_ENGA"/>
</dbReference>
<dbReference type="InterPro" id="IPR006073">
    <property type="entry name" value="GTP-bd"/>
</dbReference>
<dbReference type="InterPro" id="IPR016484">
    <property type="entry name" value="GTPase_Der"/>
</dbReference>
<dbReference type="InterPro" id="IPR032859">
    <property type="entry name" value="KH_dom-like"/>
</dbReference>
<dbReference type="InterPro" id="IPR015946">
    <property type="entry name" value="KH_dom-like_a/b"/>
</dbReference>
<dbReference type="InterPro" id="IPR027417">
    <property type="entry name" value="P-loop_NTPase"/>
</dbReference>
<dbReference type="InterPro" id="IPR005225">
    <property type="entry name" value="Small_GTP-bd"/>
</dbReference>
<dbReference type="NCBIfam" id="TIGR03594">
    <property type="entry name" value="GTPase_EngA"/>
    <property type="match status" value="1"/>
</dbReference>
<dbReference type="NCBIfam" id="TIGR00231">
    <property type="entry name" value="small_GTP"/>
    <property type="match status" value="2"/>
</dbReference>
<dbReference type="PANTHER" id="PTHR43834">
    <property type="entry name" value="GTPASE DER"/>
    <property type="match status" value="1"/>
</dbReference>
<dbReference type="PANTHER" id="PTHR43834:SF6">
    <property type="entry name" value="GTPASE DER"/>
    <property type="match status" value="1"/>
</dbReference>
<dbReference type="Pfam" id="PF14714">
    <property type="entry name" value="KH_dom-like"/>
    <property type="match status" value="1"/>
</dbReference>
<dbReference type="Pfam" id="PF01926">
    <property type="entry name" value="MMR_HSR1"/>
    <property type="match status" value="2"/>
</dbReference>
<dbReference type="PIRSF" id="PIRSF006485">
    <property type="entry name" value="GTP-binding_EngA"/>
    <property type="match status" value="1"/>
</dbReference>
<dbReference type="PRINTS" id="PR00326">
    <property type="entry name" value="GTP1OBG"/>
</dbReference>
<dbReference type="SUPFAM" id="SSF52540">
    <property type="entry name" value="P-loop containing nucleoside triphosphate hydrolases"/>
    <property type="match status" value="2"/>
</dbReference>
<dbReference type="PROSITE" id="PS51712">
    <property type="entry name" value="G_ENGA"/>
    <property type="match status" value="2"/>
</dbReference>
<keyword id="KW-0342">GTP-binding</keyword>
<keyword id="KW-0547">Nucleotide-binding</keyword>
<keyword id="KW-1185">Reference proteome</keyword>
<keyword id="KW-0677">Repeat</keyword>
<keyword id="KW-0690">Ribosome biogenesis</keyword>
<gene>
    <name evidence="1" type="primary">der</name>
    <name type="synonym">engA</name>
    <name type="ordered locus">Atu2300</name>
    <name type="ORF">AGR_C_4180</name>
</gene>
<feature type="chain" id="PRO_0000178958" description="GTPase Der">
    <location>
        <begin position="1"/>
        <end position="476"/>
    </location>
</feature>
<feature type="domain" description="EngA-type G 1">
    <location>
        <begin position="3"/>
        <end position="167"/>
    </location>
</feature>
<feature type="domain" description="EngA-type G 2">
    <location>
        <begin position="205"/>
        <end position="380"/>
    </location>
</feature>
<feature type="domain" description="KH-like" evidence="1">
    <location>
        <begin position="381"/>
        <end position="465"/>
    </location>
</feature>
<feature type="binding site" evidence="1">
    <location>
        <begin position="9"/>
        <end position="16"/>
    </location>
    <ligand>
        <name>GTP</name>
        <dbReference type="ChEBI" id="CHEBI:37565"/>
        <label>1</label>
    </ligand>
</feature>
<feature type="binding site" evidence="1">
    <location>
        <begin position="56"/>
        <end position="60"/>
    </location>
    <ligand>
        <name>GTP</name>
        <dbReference type="ChEBI" id="CHEBI:37565"/>
        <label>1</label>
    </ligand>
</feature>
<feature type="binding site" evidence="1">
    <location>
        <begin position="119"/>
        <end position="122"/>
    </location>
    <ligand>
        <name>GTP</name>
        <dbReference type="ChEBI" id="CHEBI:37565"/>
        <label>1</label>
    </ligand>
</feature>
<feature type="binding site" evidence="1">
    <location>
        <begin position="211"/>
        <end position="218"/>
    </location>
    <ligand>
        <name>GTP</name>
        <dbReference type="ChEBI" id="CHEBI:37565"/>
        <label>2</label>
    </ligand>
</feature>
<feature type="binding site" evidence="1">
    <location>
        <begin position="258"/>
        <end position="262"/>
    </location>
    <ligand>
        <name>GTP</name>
        <dbReference type="ChEBI" id="CHEBI:37565"/>
        <label>2</label>
    </ligand>
</feature>
<feature type="binding site" evidence="1">
    <location>
        <begin position="323"/>
        <end position="326"/>
    </location>
    <ligand>
        <name>GTP</name>
        <dbReference type="ChEBI" id="CHEBI:37565"/>
        <label>2</label>
    </ligand>
</feature>
<reference key="1">
    <citation type="journal article" date="2001" name="Science">
        <title>The genome of the natural genetic engineer Agrobacterium tumefaciens C58.</title>
        <authorList>
            <person name="Wood D.W."/>
            <person name="Setubal J.C."/>
            <person name="Kaul R."/>
            <person name="Monks D.E."/>
            <person name="Kitajima J.P."/>
            <person name="Okura V.K."/>
            <person name="Zhou Y."/>
            <person name="Chen L."/>
            <person name="Wood G.E."/>
            <person name="Almeida N.F. Jr."/>
            <person name="Woo L."/>
            <person name="Chen Y."/>
            <person name="Paulsen I.T."/>
            <person name="Eisen J.A."/>
            <person name="Karp P.D."/>
            <person name="Bovee D. Sr."/>
            <person name="Chapman P."/>
            <person name="Clendenning J."/>
            <person name="Deatherage G."/>
            <person name="Gillet W."/>
            <person name="Grant C."/>
            <person name="Kutyavin T."/>
            <person name="Levy R."/>
            <person name="Li M.-J."/>
            <person name="McClelland E."/>
            <person name="Palmieri A."/>
            <person name="Raymond C."/>
            <person name="Rouse G."/>
            <person name="Saenphimmachak C."/>
            <person name="Wu Z."/>
            <person name="Romero P."/>
            <person name="Gordon D."/>
            <person name="Zhang S."/>
            <person name="Yoo H."/>
            <person name="Tao Y."/>
            <person name="Biddle P."/>
            <person name="Jung M."/>
            <person name="Krespan W."/>
            <person name="Perry M."/>
            <person name="Gordon-Kamm B."/>
            <person name="Liao L."/>
            <person name="Kim S."/>
            <person name="Hendrick C."/>
            <person name="Zhao Z.-Y."/>
            <person name="Dolan M."/>
            <person name="Chumley F."/>
            <person name="Tingey S.V."/>
            <person name="Tomb J.-F."/>
            <person name="Gordon M.P."/>
            <person name="Olson M.V."/>
            <person name="Nester E.W."/>
        </authorList>
    </citation>
    <scope>NUCLEOTIDE SEQUENCE [LARGE SCALE GENOMIC DNA]</scope>
    <source>
        <strain>C58 / ATCC 33970</strain>
    </source>
</reference>
<reference key="2">
    <citation type="journal article" date="2001" name="Science">
        <title>Genome sequence of the plant pathogen and biotechnology agent Agrobacterium tumefaciens C58.</title>
        <authorList>
            <person name="Goodner B."/>
            <person name="Hinkle G."/>
            <person name="Gattung S."/>
            <person name="Miller N."/>
            <person name="Blanchard M."/>
            <person name="Qurollo B."/>
            <person name="Goldman B.S."/>
            <person name="Cao Y."/>
            <person name="Askenazi M."/>
            <person name="Halling C."/>
            <person name="Mullin L."/>
            <person name="Houmiel K."/>
            <person name="Gordon J."/>
            <person name="Vaudin M."/>
            <person name="Iartchouk O."/>
            <person name="Epp A."/>
            <person name="Liu F."/>
            <person name="Wollam C."/>
            <person name="Allinger M."/>
            <person name="Doughty D."/>
            <person name="Scott C."/>
            <person name="Lappas C."/>
            <person name="Markelz B."/>
            <person name="Flanagan C."/>
            <person name="Crowell C."/>
            <person name="Gurson J."/>
            <person name="Lomo C."/>
            <person name="Sear C."/>
            <person name="Strub G."/>
            <person name="Cielo C."/>
            <person name="Slater S."/>
        </authorList>
    </citation>
    <scope>NUCLEOTIDE SEQUENCE [LARGE SCALE GENOMIC DNA]</scope>
    <source>
        <strain>C58 / ATCC 33970</strain>
    </source>
</reference>
<evidence type="ECO:0000255" key="1">
    <source>
        <dbReference type="HAMAP-Rule" id="MF_00195"/>
    </source>
</evidence>